<protein>
    <recommendedName>
        <fullName>Uncharacterized protein R302</fullName>
    </recommendedName>
</protein>
<proteinExistence type="predicted"/>
<keyword id="KW-0325">Glycoprotein</keyword>
<keyword id="KW-0472">Membrane</keyword>
<keyword id="KW-1185">Reference proteome</keyword>
<keyword id="KW-0812">Transmembrane</keyword>
<keyword id="KW-1133">Transmembrane helix</keyword>
<sequence length="143" mass="16642">MFFLTIYHLIYKYNPLIFAQIFIGCLMYFMLIIFVWKIIDPKCFSKYICYIIIFAIIDFVVCFKFIYVKKNSSVKKVHVVTIGQANVPIETSEISDNTDYKVTYDQVSCTIDSSNNVNNMFLTSDNPVECLDEISETSLTQDE</sequence>
<comment type="subcellular location">
    <subcellularLocation>
        <location evidence="2">Membrane</location>
        <topology evidence="2">Multi-pass membrane protein</topology>
    </subcellularLocation>
</comment>
<organismHost>
    <name type="scientific">Acanthamoeba polyphaga</name>
    <name type="common">Amoeba</name>
    <dbReference type="NCBI Taxonomy" id="5757"/>
</organismHost>
<name>YR302_MIMIV</name>
<dbReference type="EMBL" id="AY653733">
    <property type="protein sequence ID" value="AAV50574.1"/>
    <property type="molecule type" value="Genomic_DNA"/>
</dbReference>
<dbReference type="SMR" id="Q5UPZ1"/>
<dbReference type="KEGG" id="vg:9924917"/>
<dbReference type="Proteomes" id="UP000001134">
    <property type="component" value="Genome"/>
</dbReference>
<dbReference type="GO" id="GO:0016020">
    <property type="term" value="C:membrane"/>
    <property type="evidence" value="ECO:0007669"/>
    <property type="project" value="UniProtKB-SubCell"/>
</dbReference>
<accession>Q5UPZ1</accession>
<gene>
    <name type="ordered locus">MIMI_R302</name>
</gene>
<evidence type="ECO:0000255" key="1"/>
<evidence type="ECO:0000305" key="2"/>
<feature type="chain" id="PRO_0000253416" description="Uncharacterized protein R302">
    <location>
        <begin position="1"/>
        <end position="143"/>
    </location>
</feature>
<feature type="transmembrane region" description="Helical" evidence="1">
    <location>
        <begin position="16"/>
        <end position="36"/>
    </location>
</feature>
<feature type="transmembrane region" description="Helical" evidence="1">
    <location>
        <begin position="48"/>
        <end position="68"/>
    </location>
</feature>
<feature type="glycosylation site" description="N-linked (GlcNAc...) asparagine; by host" evidence="1">
    <location>
        <position position="71"/>
    </location>
</feature>
<reference key="1">
    <citation type="journal article" date="2004" name="Science">
        <title>The 1.2-megabase genome sequence of Mimivirus.</title>
        <authorList>
            <person name="Raoult D."/>
            <person name="Audic S."/>
            <person name="Robert C."/>
            <person name="Abergel C."/>
            <person name="Renesto P."/>
            <person name="Ogata H."/>
            <person name="La Scola B."/>
            <person name="Susan M."/>
            <person name="Claverie J.-M."/>
        </authorList>
    </citation>
    <scope>NUCLEOTIDE SEQUENCE [LARGE SCALE GENOMIC DNA]</scope>
    <source>
        <strain>Rowbotham-Bradford</strain>
    </source>
</reference>
<organism>
    <name type="scientific">Acanthamoeba polyphaga mimivirus</name>
    <name type="common">APMV</name>
    <dbReference type="NCBI Taxonomy" id="212035"/>
    <lineage>
        <taxon>Viruses</taxon>
        <taxon>Varidnaviria</taxon>
        <taxon>Bamfordvirae</taxon>
        <taxon>Nucleocytoviricota</taxon>
        <taxon>Megaviricetes</taxon>
        <taxon>Imitervirales</taxon>
        <taxon>Mimiviridae</taxon>
        <taxon>Megamimivirinae</taxon>
        <taxon>Mimivirus</taxon>
        <taxon>Mimivirus bradfordmassiliense</taxon>
    </lineage>
</organism>